<evidence type="ECO:0000250" key="1">
    <source>
        <dbReference type="UniProtKB" id="A4Q9E8"/>
    </source>
</evidence>
<evidence type="ECO:0000250" key="2">
    <source>
        <dbReference type="UniProtKB" id="Q6EMB2"/>
    </source>
</evidence>
<evidence type="ECO:0000250" key="3">
    <source>
        <dbReference type="UniProtKB" id="Q6ZT98"/>
    </source>
</evidence>
<evidence type="ECO:0000250" key="4">
    <source>
        <dbReference type="UniProtKB" id="Q8CHB8"/>
    </source>
</evidence>
<evidence type="ECO:0000255" key="5">
    <source>
        <dbReference type="PROSITE-ProRule" id="PRU00568"/>
    </source>
</evidence>
<evidence type="ECO:0000256" key="6">
    <source>
        <dbReference type="SAM" id="MobiDB-lite"/>
    </source>
</evidence>
<evidence type="ECO:0000305" key="7"/>
<name>TTLL5_PONAB</name>
<comment type="function">
    <text evidence="2 4">Polyglutamylase which modifies tubulin, generating polyglutamate side chains on the gamma-carboxyl group of specific glutamate residues within the C-terminal tail of tubulin. Preferentially mediates ATP-dependent initiation step of the polyglutamylation reaction over the elongation step. Preferentially modifies the alpha-tubulin tail over a beta-tail (By similarity). Required for CCSAP localization to both polyglutamylated spindle and cilia microtubules. Increases the effects of transcriptional coactivator NCOA2/TIF2 in glucocorticoid receptor-mediated repression and induction and in androgen receptor-mediated induction (By similarity).</text>
</comment>
<comment type="catalytic activity">
    <reaction evidence="4">
        <text>L-glutamyl-[protein] + L-glutamate + ATP = gamma-L-glutamyl-L-glutamyl-[protein] + ADP + phosphate + H(+)</text>
        <dbReference type="Rhea" id="RHEA:60144"/>
        <dbReference type="Rhea" id="RHEA-COMP:10208"/>
        <dbReference type="Rhea" id="RHEA-COMP:15517"/>
        <dbReference type="ChEBI" id="CHEBI:15378"/>
        <dbReference type="ChEBI" id="CHEBI:29973"/>
        <dbReference type="ChEBI" id="CHEBI:29985"/>
        <dbReference type="ChEBI" id="CHEBI:30616"/>
        <dbReference type="ChEBI" id="CHEBI:43474"/>
        <dbReference type="ChEBI" id="CHEBI:143622"/>
        <dbReference type="ChEBI" id="CHEBI:456216"/>
    </reaction>
    <physiologicalReaction direction="left-to-right" evidence="4">
        <dbReference type="Rhea" id="RHEA:60145"/>
    </physiologicalReaction>
</comment>
<comment type="catalytic activity">
    <reaction evidence="4">
        <text>(L-glutamyl)(n)-gamma-L-glutamyl-L-glutamyl-[protein] + L-glutamate + ATP = (L-glutamyl)(n+1)-gamma-L-glutamyl-L-glutamyl-[protein] + ADP + phosphate + H(+)</text>
        <dbReference type="Rhea" id="RHEA:60148"/>
        <dbReference type="Rhea" id="RHEA-COMP:15519"/>
        <dbReference type="Rhea" id="RHEA-COMP:15675"/>
        <dbReference type="ChEBI" id="CHEBI:15378"/>
        <dbReference type="ChEBI" id="CHEBI:29985"/>
        <dbReference type="ChEBI" id="CHEBI:30616"/>
        <dbReference type="ChEBI" id="CHEBI:43474"/>
        <dbReference type="ChEBI" id="CHEBI:143623"/>
        <dbReference type="ChEBI" id="CHEBI:456216"/>
    </reaction>
    <physiologicalReaction direction="left-to-right" evidence="4">
        <dbReference type="Rhea" id="RHEA:60149"/>
    </physiologicalReaction>
</comment>
<comment type="cofactor">
    <cofactor evidence="1">
        <name>Mg(2+)</name>
        <dbReference type="ChEBI" id="CHEBI:18420"/>
    </cofactor>
</comment>
<comment type="subunit">
    <text evidence="2">Interacts with the transcriptional coactivators NCOA1/SRC-1 and NCOA2/TIF2.</text>
</comment>
<comment type="subcellular location">
    <subcellularLocation>
        <location evidence="2">Cell projection</location>
        <location evidence="2">Cilium</location>
    </subcellularLocation>
    <subcellularLocation>
        <location evidence="4">Cytoplasm</location>
        <location evidence="4">Cytoskeleton</location>
        <location evidence="4">Cilium basal body</location>
    </subcellularLocation>
    <subcellularLocation>
        <location evidence="2">Nucleus</location>
    </subcellularLocation>
    <subcellularLocation>
        <location evidence="2">Cytoplasm</location>
    </subcellularLocation>
    <text evidence="2 4">Localized to the base of the connecting cilium between the basal body and the adjacent daughter centriole of the cilium. In osteosarcoma cells, found in both cytoplasm and nucleus in the absence of steroid but located exclusively in the nucleus in the presence of steroid.</text>
</comment>
<comment type="domain">
    <text evidence="2 3">The flexible c-MTBD (cationic microtubule binding domain) region mediates binding to microtubules. It is positively charged and becomes ordered when bound to microtubules: it interacts with a negatively charged patch on tubulin. The presence of positive charges in the c-MTBD region is essential for proper binding.</text>
</comment>
<comment type="domain">
    <text evidence="1">Arg-186 is the main determinant for regioselectivity, which segregates between initiases and elongases in all tubulin--tyrosine ligase family. A glutamine residue at this position is found in elongases TTLL6, TTLL9, TTLL11, TTLL13, TTLL10 and favors glutamate-chain elongation, whereas an arginine residue is found in initiases TTLL2, TTLL4, TTLL5, TTLL3, TTLL8 and favors initiation.</text>
</comment>
<comment type="similarity">
    <text evidence="7">Belongs to the tubulin--tyrosine ligase family.</text>
</comment>
<keyword id="KW-0067">ATP-binding</keyword>
<keyword id="KW-0966">Cell projection</keyword>
<keyword id="KW-0969">Cilium</keyword>
<keyword id="KW-0963">Cytoplasm</keyword>
<keyword id="KW-0206">Cytoskeleton</keyword>
<keyword id="KW-0436">Ligase</keyword>
<keyword id="KW-0460">Magnesium</keyword>
<keyword id="KW-0479">Metal-binding</keyword>
<keyword id="KW-0493">Microtubule</keyword>
<keyword id="KW-0547">Nucleotide-binding</keyword>
<keyword id="KW-0539">Nucleus</keyword>
<keyword id="KW-1185">Reference proteome</keyword>
<keyword id="KW-0804">Transcription</keyword>
<gene>
    <name type="primary">TTLL5</name>
</gene>
<protein>
    <recommendedName>
        <fullName evidence="4">Tubulin polyglutamylase TTLL5</fullName>
        <ecNumber evidence="4">6.3.2.-</ecNumber>
    </recommendedName>
    <alternativeName>
        <fullName>Tubulin--tyrosine ligase-like protein 5</fullName>
    </alternativeName>
</protein>
<organism>
    <name type="scientific">Pongo abelii</name>
    <name type="common">Sumatran orangutan</name>
    <name type="synonym">Pongo pygmaeus abelii</name>
    <dbReference type="NCBI Taxonomy" id="9601"/>
    <lineage>
        <taxon>Eukaryota</taxon>
        <taxon>Metazoa</taxon>
        <taxon>Chordata</taxon>
        <taxon>Craniata</taxon>
        <taxon>Vertebrata</taxon>
        <taxon>Euteleostomi</taxon>
        <taxon>Mammalia</taxon>
        <taxon>Eutheria</taxon>
        <taxon>Euarchontoglires</taxon>
        <taxon>Primates</taxon>
        <taxon>Haplorrhini</taxon>
        <taxon>Catarrhini</taxon>
        <taxon>Hominidae</taxon>
        <taxon>Pongo</taxon>
    </lineage>
</organism>
<feature type="chain" id="PRO_0000223343" description="Tubulin polyglutamylase TTLL5">
    <location>
        <begin position="1"/>
        <end position="1299"/>
    </location>
</feature>
<feature type="domain" description="TTL" evidence="5">
    <location>
        <begin position="62"/>
        <end position="407"/>
    </location>
</feature>
<feature type="region of interest" description="c-MTBD region" evidence="2">
    <location>
        <begin position="378"/>
        <end position="488"/>
    </location>
</feature>
<feature type="region of interest" description="Disordered" evidence="6">
    <location>
        <begin position="589"/>
        <end position="626"/>
    </location>
</feature>
<feature type="region of interest" description="Disordered" evidence="6">
    <location>
        <begin position="832"/>
        <end position="853"/>
    </location>
</feature>
<feature type="region of interest" description="Disordered" evidence="6">
    <location>
        <begin position="918"/>
        <end position="941"/>
    </location>
</feature>
<feature type="region of interest" description="Disordered" evidence="6">
    <location>
        <begin position="1088"/>
        <end position="1130"/>
    </location>
</feature>
<feature type="region of interest" description="Disordered" evidence="6">
    <location>
        <begin position="1217"/>
        <end position="1275"/>
    </location>
</feature>
<feature type="compositionally biased region" description="Acidic residues" evidence="6">
    <location>
        <begin position="597"/>
        <end position="617"/>
    </location>
</feature>
<feature type="compositionally biased region" description="Low complexity" evidence="6">
    <location>
        <begin position="838"/>
        <end position="847"/>
    </location>
</feature>
<feature type="compositionally biased region" description="Polar residues" evidence="6">
    <location>
        <begin position="1104"/>
        <end position="1130"/>
    </location>
</feature>
<feature type="compositionally biased region" description="Polar residues" evidence="6">
    <location>
        <begin position="1217"/>
        <end position="1230"/>
    </location>
</feature>
<feature type="compositionally biased region" description="Polar residues" evidence="6">
    <location>
        <begin position="1258"/>
        <end position="1275"/>
    </location>
</feature>
<feature type="binding site" evidence="1">
    <location>
        <position position="180"/>
    </location>
    <ligand>
        <name>ATP</name>
        <dbReference type="ChEBI" id="CHEBI:30616"/>
    </ligand>
</feature>
<feature type="binding site" evidence="1">
    <location>
        <begin position="186"/>
        <end position="187"/>
    </location>
    <ligand>
        <name>ATP</name>
        <dbReference type="ChEBI" id="CHEBI:30616"/>
    </ligand>
</feature>
<feature type="binding site" evidence="1">
    <location>
        <position position="186"/>
    </location>
    <ligand>
        <name>a protein</name>
        <dbReference type="ChEBI" id="CHEBI:16541"/>
    </ligand>
    <ligandPart>
        <name>L-glutamate residue</name>
        <dbReference type="ChEBI" id="CHEBI:29973"/>
        <note>L-glutamate acceptor residue in protein target</note>
    </ligandPart>
</feature>
<feature type="binding site" evidence="1">
    <location>
        <begin position="208"/>
        <end position="211"/>
    </location>
    <ligand>
        <name>ATP</name>
        <dbReference type="ChEBI" id="CHEBI:30616"/>
    </ligand>
</feature>
<feature type="binding site" evidence="1">
    <location>
        <begin position="221"/>
        <end position="223"/>
    </location>
    <ligand>
        <name>ATP</name>
        <dbReference type="ChEBI" id="CHEBI:30616"/>
    </ligand>
</feature>
<feature type="binding site" evidence="1">
    <location>
        <position position="247"/>
    </location>
    <ligand>
        <name>L-glutamate</name>
        <dbReference type="ChEBI" id="CHEBI:29985"/>
    </ligand>
</feature>
<feature type="binding site" evidence="1">
    <location>
        <begin position="268"/>
        <end position="269"/>
    </location>
    <ligand>
        <name>ATP</name>
        <dbReference type="ChEBI" id="CHEBI:30616"/>
    </ligand>
</feature>
<feature type="binding site" evidence="1">
    <location>
        <position position="270"/>
    </location>
    <ligand>
        <name>L-glutamate</name>
        <dbReference type="ChEBI" id="CHEBI:29985"/>
    </ligand>
</feature>
<feature type="binding site" evidence="1">
    <location>
        <position position="271"/>
    </location>
    <ligand>
        <name>L-glutamate</name>
        <dbReference type="ChEBI" id="CHEBI:29985"/>
    </ligand>
</feature>
<feature type="binding site" evidence="1">
    <location>
        <position position="293"/>
    </location>
    <ligand>
        <name>L-glutamate</name>
        <dbReference type="ChEBI" id="CHEBI:29985"/>
    </ligand>
</feature>
<feature type="binding site" evidence="1">
    <location>
        <position position="353"/>
    </location>
    <ligand>
        <name>Mg(2+)</name>
        <dbReference type="ChEBI" id="CHEBI:18420"/>
        <label>1</label>
    </ligand>
</feature>
<feature type="binding site" evidence="1">
    <location>
        <position position="366"/>
    </location>
    <ligand>
        <name>Mg(2+)</name>
        <dbReference type="ChEBI" id="CHEBI:18420"/>
        <label>1</label>
    </ligand>
</feature>
<feature type="binding site" evidence="1">
    <location>
        <position position="366"/>
    </location>
    <ligand>
        <name>Mg(2+)</name>
        <dbReference type="ChEBI" id="CHEBI:18420"/>
        <label>2</label>
    </ligand>
</feature>
<feature type="binding site" evidence="1">
    <location>
        <position position="368"/>
    </location>
    <ligand>
        <name>Mg(2+)</name>
        <dbReference type="ChEBI" id="CHEBI:18420"/>
        <label>2</label>
    </ligand>
</feature>
<feature type="binding site" evidence="1">
    <location>
        <position position="384"/>
    </location>
    <ligand>
        <name>L-glutamate</name>
        <dbReference type="ChEBI" id="CHEBI:29985"/>
    </ligand>
</feature>
<feature type="site" description="Essential for specifying initiation versus elongation step of the polyglutamylase activity" evidence="1">
    <location>
        <position position="186"/>
    </location>
</feature>
<proteinExistence type="evidence at transcript level"/>
<sequence>MPIVMARDLEETASSSEDEEVISQEDHPCIMWTGGCRRIPVLVFHADAILTKDNNIRVIGERYHLSYKIVRTDSRLVRSILTAHGFHEVHPSSTDYNLMWTGSHLKPFLLRTLSEAQKVNHFPRSYELTRKDRLYKNIIRMQHTHGFKAFHILPQTFLLPAEYAEFCNSYSKDRGPWIVKPVASSRGRGVYLINNPNQISLEENILVSRYINNPLLIDDFKFDVRLYVLVTSYDPLVIYLYEEGLARFATVRYDQGAKNIRNQFMHLTNYSVNKKSGDYVSCDDPEVEDYGNKWSMSAMLRYLKQEGRDTTALMAHVEDLIIKTIISAELAIATACKTFVPHRSSCFELYGFDVLIDSTLKPWLLEVNLSPSLACDAPLDLKIKASMISDMFTVVGFVCQDPAQRASTRPIYPTFESSRRNPFQKPQRCRPLSASDAEMKNLVGSAREKGPGKLGGSVLGLSMEEIKVLRRVKEENDRRGGFIRIFPTSETWEIYGSYLEHKTSMNYMLATRLFQDRGNPRRSLLTGRTRMTADGAPELKIESLNSKAKLHAALYERKLLSLEVRKRRRRSSRLRAMRPKYPVITQPAEMNVKTETESEEEEEVALDNEEEEQEASQEESAGFLRENQAKYTPSLTALVENTPKEHSMKVREWNNKGGHCCKLETQELEPKFNLVQILQDNGNLSKVQARIAFSAYLQHVQIRLMKDSGGQTFSASWAAKEDEQMELVVRFLKRASNNLQHSLRMVLPSRRLALLERRRILAHQLGDFIIVYNKETEQMAEKKSKKKVEEEEEDGVNMENFQEFIRQASEAELEEVLTFYTQKNKSASVFLGTHSKSSKNNNSYSDSGAKGDHPETIMEEVKIKPPKQQQTTEIHSDKLSRFTTSAEKEAKLVYSNSSSTPFSGPTATLQKIPNTHLSSVTTSDLSPGPGHHSSLSQIPSAIPSMPHQPTVLLNTVSASASPCLHTGTQNIPNPAGLPRCRSGSHTIGPFSSFQSAAHIYSQKLSRPSSAKAAGSCYLNKHHSGIAKTQKEGEDASSYSKRYNQSMVTAELQRLAEKQAARQYSPSSHINLLTQQVTNLNLATGIINRSSASTPPTLRPIISPSGPTWSTQSDPQAPENHSSPPGSRSLQTGVFAWEGEVENNVYSKATGVVPQHKYHPTAGSYQLHFALQQLEQQKLQSRQLLDQSRARHQAIFGSQTLPNSNLWTMNNGAGCRISSATASGQKPTTLPQKVVPPPSSCASLVPKPPPNHKQVLRRATSQRASKGSSAEGQLNGLQSSLNPAAFVPITSSTDPAHTKI</sequence>
<accession>Q5R978</accession>
<dbReference type="EC" id="6.3.2.-" evidence="4"/>
<dbReference type="EMBL" id="CR859514">
    <property type="protein sequence ID" value="CAH91682.1"/>
    <property type="molecule type" value="mRNA"/>
</dbReference>
<dbReference type="RefSeq" id="NP_001125985.1">
    <property type="nucleotide sequence ID" value="NM_001132513.1"/>
</dbReference>
<dbReference type="SMR" id="Q5R978"/>
<dbReference type="FunCoup" id="Q5R978">
    <property type="interactions" value="1676"/>
</dbReference>
<dbReference type="STRING" id="9601.ENSPPYP00000006833"/>
<dbReference type="GeneID" id="100172924"/>
<dbReference type="KEGG" id="pon:100172924"/>
<dbReference type="CTD" id="23093"/>
<dbReference type="eggNOG" id="KOG2156">
    <property type="taxonomic scope" value="Eukaryota"/>
</dbReference>
<dbReference type="eggNOG" id="KOG2157">
    <property type="taxonomic scope" value="Eukaryota"/>
</dbReference>
<dbReference type="InParanoid" id="Q5R978"/>
<dbReference type="OrthoDB" id="2016263at2759"/>
<dbReference type="Proteomes" id="UP000001595">
    <property type="component" value="Unplaced"/>
</dbReference>
<dbReference type="GO" id="GO:0036064">
    <property type="term" value="C:ciliary basal body"/>
    <property type="evidence" value="ECO:0007669"/>
    <property type="project" value="TreeGrafter"/>
</dbReference>
<dbReference type="GO" id="GO:0005737">
    <property type="term" value="C:cytoplasm"/>
    <property type="evidence" value="ECO:0007669"/>
    <property type="project" value="UniProtKB-SubCell"/>
</dbReference>
<dbReference type="GO" id="GO:0005874">
    <property type="term" value="C:microtubule"/>
    <property type="evidence" value="ECO:0007669"/>
    <property type="project" value="UniProtKB-KW"/>
</dbReference>
<dbReference type="GO" id="GO:0005634">
    <property type="term" value="C:nucleus"/>
    <property type="evidence" value="ECO:0007669"/>
    <property type="project" value="UniProtKB-SubCell"/>
</dbReference>
<dbReference type="GO" id="GO:0005524">
    <property type="term" value="F:ATP binding"/>
    <property type="evidence" value="ECO:0007669"/>
    <property type="project" value="UniProtKB-KW"/>
</dbReference>
<dbReference type="GO" id="GO:0046872">
    <property type="term" value="F:metal ion binding"/>
    <property type="evidence" value="ECO:0007669"/>
    <property type="project" value="UniProtKB-KW"/>
</dbReference>
<dbReference type="GO" id="GO:0106438">
    <property type="term" value="F:protein-glutamic acid ligase activity, elongating"/>
    <property type="evidence" value="ECO:0007669"/>
    <property type="project" value="RHEA"/>
</dbReference>
<dbReference type="GO" id="GO:0106437">
    <property type="term" value="F:protein-glutamic acid ligase activity, initiating"/>
    <property type="evidence" value="ECO:0007669"/>
    <property type="project" value="RHEA"/>
</dbReference>
<dbReference type="GO" id="GO:0015631">
    <property type="term" value="F:tubulin binding"/>
    <property type="evidence" value="ECO:0007669"/>
    <property type="project" value="TreeGrafter"/>
</dbReference>
<dbReference type="GO" id="GO:0070740">
    <property type="term" value="F:tubulin-glutamic acid ligase activity"/>
    <property type="evidence" value="ECO:0000250"/>
    <property type="project" value="UniProtKB"/>
</dbReference>
<dbReference type="GO" id="GO:0000226">
    <property type="term" value="P:microtubule cytoskeleton organization"/>
    <property type="evidence" value="ECO:0007669"/>
    <property type="project" value="TreeGrafter"/>
</dbReference>
<dbReference type="GO" id="GO:0036211">
    <property type="term" value="P:protein modification process"/>
    <property type="evidence" value="ECO:0007669"/>
    <property type="project" value="InterPro"/>
</dbReference>
<dbReference type="FunFam" id="3.30.470.20:FF:000009">
    <property type="entry name" value="tubulin polyglutamylase TTLL5 isoform X1"/>
    <property type="match status" value="1"/>
</dbReference>
<dbReference type="Gene3D" id="3.30.470.20">
    <property type="entry name" value="ATP-grasp fold, B domain"/>
    <property type="match status" value="1"/>
</dbReference>
<dbReference type="InterPro" id="IPR004344">
    <property type="entry name" value="TTL/TTLL_fam"/>
</dbReference>
<dbReference type="PANTHER" id="PTHR12241">
    <property type="entry name" value="TUBULIN POLYGLUTAMYLASE"/>
    <property type="match status" value="1"/>
</dbReference>
<dbReference type="PANTHER" id="PTHR12241:SF145">
    <property type="entry name" value="TUBULIN POLYGLUTAMYLASE TTLL5"/>
    <property type="match status" value="1"/>
</dbReference>
<dbReference type="Pfam" id="PF03133">
    <property type="entry name" value="TTL"/>
    <property type="match status" value="1"/>
</dbReference>
<dbReference type="SUPFAM" id="SSF56059">
    <property type="entry name" value="Glutathione synthetase ATP-binding domain-like"/>
    <property type="match status" value="1"/>
</dbReference>
<dbReference type="PROSITE" id="PS51221">
    <property type="entry name" value="TTL"/>
    <property type="match status" value="1"/>
</dbReference>
<reference key="1">
    <citation type="submission" date="2004-11" db="EMBL/GenBank/DDBJ databases">
        <authorList>
            <consortium name="The German cDNA consortium"/>
        </authorList>
    </citation>
    <scope>NUCLEOTIDE SEQUENCE [LARGE SCALE MRNA]</scope>
    <source>
        <tissue>Brain cortex</tissue>
    </source>
</reference>